<organism>
    <name type="scientific">Xenopus tropicalis</name>
    <name type="common">Western clawed frog</name>
    <name type="synonym">Silurana tropicalis</name>
    <dbReference type="NCBI Taxonomy" id="8364"/>
    <lineage>
        <taxon>Eukaryota</taxon>
        <taxon>Metazoa</taxon>
        <taxon>Chordata</taxon>
        <taxon>Craniata</taxon>
        <taxon>Vertebrata</taxon>
        <taxon>Euteleostomi</taxon>
        <taxon>Amphibia</taxon>
        <taxon>Batrachia</taxon>
        <taxon>Anura</taxon>
        <taxon>Pipoidea</taxon>
        <taxon>Pipidae</taxon>
        <taxon>Xenopodinae</taxon>
        <taxon>Xenopus</taxon>
        <taxon>Silurana</taxon>
    </lineage>
</organism>
<proteinExistence type="evidence at transcript level"/>
<evidence type="ECO:0000250" key="1">
    <source>
        <dbReference type="UniProtKB" id="E2AXC7"/>
    </source>
</evidence>
<evidence type="ECO:0000250" key="2">
    <source>
        <dbReference type="UniProtKB" id="P46736"/>
    </source>
</evidence>
<evidence type="ECO:0000250" key="3">
    <source>
        <dbReference type="UniProtKB" id="P46737"/>
    </source>
</evidence>
<evidence type="ECO:0000255" key="4">
    <source>
        <dbReference type="PROSITE-ProRule" id="PRU01182"/>
    </source>
</evidence>
<evidence type="ECO:0000305" key="5"/>
<keyword id="KW-0131">Cell cycle</keyword>
<keyword id="KW-0132">Cell division</keyword>
<keyword id="KW-0156">Chromatin regulator</keyword>
<keyword id="KW-0963">Cytoplasm</keyword>
<keyword id="KW-0206">Cytoskeleton</keyword>
<keyword id="KW-0227">DNA damage</keyword>
<keyword id="KW-0234">DNA repair</keyword>
<keyword id="KW-0378">Hydrolase</keyword>
<keyword id="KW-0479">Metal-binding</keyword>
<keyword id="KW-0482">Metalloprotease</keyword>
<keyword id="KW-0498">Mitosis</keyword>
<keyword id="KW-0539">Nucleus</keyword>
<keyword id="KW-0645">Protease</keyword>
<keyword id="KW-1185">Reference proteome</keyword>
<keyword id="KW-0833">Ubl conjugation pathway</keyword>
<keyword id="KW-0862">Zinc</keyword>
<feature type="chain" id="PRO_0000373950" description="Lys-63-specific deubiquitinase BRCC36">
    <location>
        <begin position="1"/>
        <end position="261"/>
    </location>
</feature>
<feature type="domain" description="MPN" evidence="4">
    <location>
        <begin position="6"/>
        <end position="149"/>
    </location>
</feature>
<feature type="short sequence motif" description="JAMM motif" evidence="4">
    <location>
        <begin position="92"/>
        <end position="105"/>
    </location>
</feature>
<feature type="binding site" evidence="4">
    <location>
        <position position="92"/>
    </location>
    <ligand>
        <name>Zn(2+)</name>
        <dbReference type="ChEBI" id="CHEBI:29105"/>
        <note>catalytic</note>
    </ligand>
</feature>
<feature type="binding site" evidence="4">
    <location>
        <position position="94"/>
    </location>
    <ligand>
        <name>Zn(2+)</name>
        <dbReference type="ChEBI" id="CHEBI:29105"/>
        <note>catalytic</note>
    </ligand>
</feature>
<feature type="binding site" evidence="4">
    <location>
        <position position="105"/>
    </location>
    <ligand>
        <name>Zn(2+)</name>
        <dbReference type="ChEBI" id="CHEBI:29105"/>
        <note>catalytic</note>
    </ligand>
</feature>
<dbReference type="EC" id="3.4.19.-" evidence="2"/>
<dbReference type="EMBL" id="CR760965">
    <property type="protein sequence ID" value="CAJ82080.1"/>
    <property type="molecule type" value="mRNA"/>
</dbReference>
<dbReference type="EMBL" id="BC096514">
    <property type="protein sequence ID" value="AAH96514.1"/>
    <property type="molecule type" value="mRNA"/>
</dbReference>
<dbReference type="RefSeq" id="NP_001016457.1">
    <property type="nucleotide sequence ID" value="NM_001016457.2"/>
</dbReference>
<dbReference type="SMR" id="Q4VA72"/>
<dbReference type="FunCoup" id="Q4VA72">
    <property type="interactions" value="2755"/>
</dbReference>
<dbReference type="STRING" id="8364.ENSXETP00000029964"/>
<dbReference type="MEROPS" id="M67.004"/>
<dbReference type="PaxDb" id="8364-ENSXETP00000055344"/>
<dbReference type="DNASU" id="549211"/>
<dbReference type="GeneID" id="549211"/>
<dbReference type="KEGG" id="xtr:549211"/>
<dbReference type="AGR" id="Xenbase:XB-GENE-5812885"/>
<dbReference type="CTD" id="79184"/>
<dbReference type="Xenbase" id="XB-GENE-5812885">
    <property type="gene designation" value="brcc3"/>
</dbReference>
<dbReference type="eggNOG" id="KOG1555">
    <property type="taxonomic scope" value="Eukaryota"/>
</dbReference>
<dbReference type="InParanoid" id="Q4VA72"/>
<dbReference type="OMA" id="CIGEIDT"/>
<dbReference type="OrthoDB" id="446074at2759"/>
<dbReference type="Reactome" id="R-XTR-5689901">
    <property type="pathway name" value="Metalloprotease DUBs"/>
</dbReference>
<dbReference type="Proteomes" id="UP000008143">
    <property type="component" value="Chromosome 8"/>
</dbReference>
<dbReference type="Bgee" id="ENSXETG00000026184">
    <property type="expression patterns" value="Expressed in testis and 12 other cell types or tissues"/>
</dbReference>
<dbReference type="GO" id="GO:0070531">
    <property type="term" value="C:BRCA1-A complex"/>
    <property type="evidence" value="ECO:0000250"/>
    <property type="project" value="UniProtKB"/>
</dbReference>
<dbReference type="GO" id="GO:0070552">
    <property type="term" value="C:BRISC complex"/>
    <property type="evidence" value="ECO:0000250"/>
    <property type="project" value="UniProtKB"/>
</dbReference>
<dbReference type="GO" id="GO:0005737">
    <property type="term" value="C:cytoplasm"/>
    <property type="evidence" value="ECO:0007669"/>
    <property type="project" value="UniProtKB-SubCell"/>
</dbReference>
<dbReference type="GO" id="GO:0005634">
    <property type="term" value="C:nucleus"/>
    <property type="evidence" value="ECO:0000250"/>
    <property type="project" value="UniProtKB"/>
</dbReference>
<dbReference type="GO" id="GO:0000922">
    <property type="term" value="C:spindle pole"/>
    <property type="evidence" value="ECO:0007669"/>
    <property type="project" value="UniProtKB-SubCell"/>
</dbReference>
<dbReference type="GO" id="GO:0004843">
    <property type="term" value="F:cysteine-type deubiquitinase activity"/>
    <property type="evidence" value="ECO:0007669"/>
    <property type="project" value="InterPro"/>
</dbReference>
<dbReference type="GO" id="GO:0046872">
    <property type="term" value="F:metal ion binding"/>
    <property type="evidence" value="ECO:0007669"/>
    <property type="project" value="UniProtKB-KW"/>
</dbReference>
<dbReference type="GO" id="GO:0140492">
    <property type="term" value="F:metal-dependent deubiquitinase activity"/>
    <property type="evidence" value="ECO:0000250"/>
    <property type="project" value="UniProtKB"/>
</dbReference>
<dbReference type="GO" id="GO:0008237">
    <property type="term" value="F:metallopeptidase activity"/>
    <property type="evidence" value="ECO:0000250"/>
    <property type="project" value="UniProtKB"/>
</dbReference>
<dbReference type="GO" id="GO:0031593">
    <property type="term" value="F:polyubiquitin modification-dependent protein binding"/>
    <property type="evidence" value="ECO:0000250"/>
    <property type="project" value="UniProtKB"/>
</dbReference>
<dbReference type="GO" id="GO:0051301">
    <property type="term" value="P:cell division"/>
    <property type="evidence" value="ECO:0007669"/>
    <property type="project" value="UniProtKB-KW"/>
</dbReference>
<dbReference type="GO" id="GO:0140861">
    <property type="term" value="P:DNA repair-dependent chromatin remodeling"/>
    <property type="evidence" value="ECO:0000250"/>
    <property type="project" value="UniProtKB"/>
</dbReference>
<dbReference type="GO" id="GO:0006302">
    <property type="term" value="P:double-strand break repair"/>
    <property type="evidence" value="ECO:0000250"/>
    <property type="project" value="UniProtKB"/>
</dbReference>
<dbReference type="GO" id="GO:0007095">
    <property type="term" value="P:mitotic G2 DNA damage checkpoint signaling"/>
    <property type="evidence" value="ECO:0000250"/>
    <property type="project" value="UniProtKB"/>
</dbReference>
<dbReference type="GO" id="GO:0045739">
    <property type="term" value="P:positive regulation of DNA repair"/>
    <property type="evidence" value="ECO:0000250"/>
    <property type="project" value="UniProtKB"/>
</dbReference>
<dbReference type="GO" id="GO:1900227">
    <property type="term" value="P:positive regulation of NLRP3 inflammasome complex assembly"/>
    <property type="evidence" value="ECO:0000250"/>
    <property type="project" value="UniProtKB"/>
</dbReference>
<dbReference type="GO" id="GO:0070536">
    <property type="term" value="P:protein K63-linked deubiquitination"/>
    <property type="evidence" value="ECO:0000250"/>
    <property type="project" value="UniProtKB"/>
</dbReference>
<dbReference type="GO" id="GO:0006508">
    <property type="term" value="P:proteolysis"/>
    <property type="evidence" value="ECO:0007669"/>
    <property type="project" value="UniProtKB-KW"/>
</dbReference>
<dbReference type="GO" id="GO:0010212">
    <property type="term" value="P:response to ionizing radiation"/>
    <property type="evidence" value="ECO:0000250"/>
    <property type="project" value="UniProtKB"/>
</dbReference>
<dbReference type="CDD" id="cd08068">
    <property type="entry name" value="MPN_BRCC36"/>
    <property type="match status" value="1"/>
</dbReference>
<dbReference type="FunFam" id="3.40.140.10:FF:000015">
    <property type="entry name" value="Lys-63-specific deubiquitinase BRCC36 isoform 3"/>
    <property type="match status" value="1"/>
</dbReference>
<dbReference type="Gene3D" id="3.40.140.10">
    <property type="entry name" value="Cytidine Deaminase, domain 2"/>
    <property type="match status" value="1"/>
</dbReference>
<dbReference type="InterPro" id="IPR040749">
    <property type="entry name" value="BRCC36_C"/>
</dbReference>
<dbReference type="InterPro" id="IPR000555">
    <property type="entry name" value="JAMM/MPN+_dom"/>
</dbReference>
<dbReference type="InterPro" id="IPR050242">
    <property type="entry name" value="JAMM_MPN+_peptidase_M67A"/>
</dbReference>
<dbReference type="InterPro" id="IPR037518">
    <property type="entry name" value="MPN"/>
</dbReference>
<dbReference type="InterPro" id="IPR033860">
    <property type="entry name" value="MPN_BRCC36"/>
</dbReference>
<dbReference type="PANTHER" id="PTHR10410">
    <property type="entry name" value="EUKARYOTIC TRANSLATION INITIATION FACTOR 3 -RELATED"/>
    <property type="match status" value="1"/>
</dbReference>
<dbReference type="Pfam" id="PF18110">
    <property type="entry name" value="BRCC36_C"/>
    <property type="match status" value="1"/>
</dbReference>
<dbReference type="Pfam" id="PF01398">
    <property type="entry name" value="JAB"/>
    <property type="match status" value="1"/>
</dbReference>
<dbReference type="SMART" id="SM00232">
    <property type="entry name" value="JAB_MPN"/>
    <property type="match status" value="1"/>
</dbReference>
<dbReference type="SUPFAM" id="SSF102712">
    <property type="entry name" value="JAB1/MPN domain"/>
    <property type="match status" value="1"/>
</dbReference>
<dbReference type="PROSITE" id="PS50249">
    <property type="entry name" value="MPN"/>
    <property type="match status" value="1"/>
</dbReference>
<reference key="1">
    <citation type="submission" date="2006-10" db="EMBL/GenBank/DDBJ databases">
        <authorList>
            <consortium name="Sanger Xenopus tropicalis EST/cDNA project"/>
        </authorList>
    </citation>
    <scope>NUCLEOTIDE SEQUENCE [LARGE SCALE MRNA]</scope>
    <source>
        <tissue>Egg</tissue>
    </source>
</reference>
<reference key="2">
    <citation type="submission" date="2005-05" db="EMBL/GenBank/DDBJ databases">
        <authorList>
            <consortium name="NIH - Xenopus Gene Collection (XGC) project"/>
        </authorList>
    </citation>
    <scope>NUCLEOTIDE SEQUENCE [LARGE SCALE MRNA]</scope>
</reference>
<comment type="function">
    <text evidence="2 3">Metalloprotease that specifically cleaves 'Lys-63'-linked polyubiquitin chains. Does not have activity toward 'Lys-48'-linked polyubiquitin chains. Component of the BRCA1-A complex, a complex that specifically recognizes 'Lys-63'-linked ubiquitinated histones H2A and H2AX at DNA lesions sites, leading to target the brca1-bard1 heterodimer to sites of DNA damage at double-strand breaks (DSBs). In the BRCA1-A complex, it specifically removes 'Lys-63'-linked ubiquitin on histones H2A and H2AX, antagonizing the rnf8-dependent ubiquitination at double-strand breaks (DSBs). Catalytic subunit of the BRISC complex, a multiprotein complex that specifically cleaves 'Lys-63'-linked ubiquitin in various substrates. Mediates the specific 'Lys-63'-specific deubiquitination associated with the COP9 signalosome complex (CSN), via the interaction of the BRISC complex with the CSN complex. The BRISC complex is required for normal mitotic spindle assembly and microtubule attachment to kinetochores via its role in deubiquitinating numa1. Plays a role in interferon signaling via its role in the deubiquitination of the interferon receptor ifnar1; deubiquitination increases ifnar1 activity by enhancing its stability and cell surface expression. Acts as a regulator of the NLRP3 inflammasome by mediating deubiquitination of nlrp3. Down-regulates the response to bacterial lipopolysaccharide (LPS) via its role in ifnar1 deubiquitination.</text>
</comment>
<comment type="cofactor">
    <cofactor evidence="1">
        <name>Zn(2+)</name>
        <dbReference type="ChEBI" id="CHEBI:29105"/>
    </cofactor>
    <text evidence="1">Binds 1 zinc ion per subunit.</text>
</comment>
<comment type="subunit">
    <text evidence="2">Component of the BRCA1-A complex, at least composed of brca1, bard1, uimc1/rap80, abraxas1, brcc3/brcc36, babam2 and babam1/nba1. In the BRCA1-A complex, interacts directly with abraxas1 and babam2. Component of the BRISC complex, at least composed of abraxas2, brcc3/brcc36, babam2 and babam1/nba1. Within the complex, interacts directly with abraxas2. Both the BRCA1-A complex and the BRISC complex bind polyubiquitin (By similarity).</text>
</comment>
<comment type="subcellular location">
    <subcellularLocation>
        <location evidence="2">Nucleus</location>
    </subcellularLocation>
    <subcellularLocation>
        <location evidence="2">Cytoplasm</location>
    </subcellularLocation>
    <subcellularLocation>
        <location evidence="2">Cytoplasm</location>
        <location evidence="2">Cytoskeleton</location>
        <location evidence="2">Spindle pole</location>
    </subcellularLocation>
    <text evidence="2">Localizes at sites of DNA damage at double-strand breaks (DSBs). Interaction with abraxas2 retains brcc3 in the cytoplasm.</text>
</comment>
<comment type="similarity">
    <text evidence="5">Belongs to the peptidase M67A family. BRCC36 subfamily.</text>
</comment>
<gene>
    <name type="primary">brcc3</name>
    <name type="synonym">brcc36</name>
    <name type="ORF">TEgg028n11.1</name>
</gene>
<protein>
    <recommendedName>
        <fullName>Lys-63-specific deubiquitinase BRCC36</fullName>
        <ecNumber evidence="2">3.4.19.-</ecNumber>
    </recommendedName>
    <alternativeName>
        <fullName>BRCA1-A complex subunit BRCC36</fullName>
    </alternativeName>
    <alternativeName>
        <fullName>BRCA1/BRCA2-containing complex subunit 3</fullName>
    </alternativeName>
    <alternativeName>
        <fullName>BRCA1/BRCA2-containing complex subunit 36</fullName>
    </alternativeName>
    <alternativeName>
        <fullName>BRISC complex subunit BRCC36</fullName>
    </alternativeName>
</protein>
<name>BRCC3_XENTR</name>
<accession>Q4VA72</accession>
<sequence>MAVQAVHIQGDAFLVCVTHSLSTEREEVMGLCIGEVDTQKVVHIHSVIILRRSDKRKDRVEISPEQLSAATTEADRLAEITGRPMRVVGWYHSHPHITVWPSHVDVRTQAMYQMMDVGFVGLIFSCFIEDKNTKTGRILYTCFQSVQAQKSSEYERIEVPLHVVPHNTIRKVCLESAVELPRILCQEEQDAYRRIHSLGHLDSITKIHNGSVFTKNLCGQMSAISGPLLQWLEDRLEQNQQRAQELQSEKEQLLQELKALG</sequence>